<organism>
    <name type="scientific">Methylorubrum extorquens (strain CM4 / NCIMB 13688)</name>
    <name type="common">Methylobacterium extorquens</name>
    <dbReference type="NCBI Taxonomy" id="440085"/>
    <lineage>
        <taxon>Bacteria</taxon>
        <taxon>Pseudomonadati</taxon>
        <taxon>Pseudomonadota</taxon>
        <taxon>Alphaproteobacteria</taxon>
        <taxon>Hyphomicrobiales</taxon>
        <taxon>Methylobacteriaceae</taxon>
        <taxon>Methylorubrum</taxon>
    </lineage>
</organism>
<comment type="similarity">
    <text evidence="1">Belongs to the universal ribosomal protein uS9 family.</text>
</comment>
<accession>B7KPU6</accession>
<dbReference type="EMBL" id="CP001298">
    <property type="protein sequence ID" value="ACK83682.1"/>
    <property type="molecule type" value="Genomic_DNA"/>
</dbReference>
<dbReference type="RefSeq" id="WP_004446858.1">
    <property type="nucleotide sequence ID" value="NC_011757.1"/>
</dbReference>
<dbReference type="SMR" id="B7KPU6"/>
<dbReference type="GeneID" id="72990249"/>
<dbReference type="KEGG" id="mch:Mchl_2843"/>
<dbReference type="HOGENOM" id="CLU_046483_2_0_5"/>
<dbReference type="Proteomes" id="UP000002385">
    <property type="component" value="Chromosome"/>
</dbReference>
<dbReference type="GO" id="GO:0022627">
    <property type="term" value="C:cytosolic small ribosomal subunit"/>
    <property type="evidence" value="ECO:0007669"/>
    <property type="project" value="TreeGrafter"/>
</dbReference>
<dbReference type="GO" id="GO:0003723">
    <property type="term" value="F:RNA binding"/>
    <property type="evidence" value="ECO:0007669"/>
    <property type="project" value="TreeGrafter"/>
</dbReference>
<dbReference type="GO" id="GO:0003735">
    <property type="term" value="F:structural constituent of ribosome"/>
    <property type="evidence" value="ECO:0007669"/>
    <property type="project" value="InterPro"/>
</dbReference>
<dbReference type="GO" id="GO:0006412">
    <property type="term" value="P:translation"/>
    <property type="evidence" value="ECO:0007669"/>
    <property type="project" value="UniProtKB-UniRule"/>
</dbReference>
<dbReference type="FunFam" id="3.30.230.10:FF:000001">
    <property type="entry name" value="30S ribosomal protein S9"/>
    <property type="match status" value="1"/>
</dbReference>
<dbReference type="Gene3D" id="3.30.230.10">
    <property type="match status" value="1"/>
</dbReference>
<dbReference type="HAMAP" id="MF_00532_B">
    <property type="entry name" value="Ribosomal_uS9_B"/>
    <property type="match status" value="1"/>
</dbReference>
<dbReference type="InterPro" id="IPR020568">
    <property type="entry name" value="Ribosomal_Su5_D2-typ_SF"/>
</dbReference>
<dbReference type="InterPro" id="IPR000754">
    <property type="entry name" value="Ribosomal_uS9"/>
</dbReference>
<dbReference type="InterPro" id="IPR023035">
    <property type="entry name" value="Ribosomal_uS9_bac/plastid"/>
</dbReference>
<dbReference type="InterPro" id="IPR020574">
    <property type="entry name" value="Ribosomal_uS9_CS"/>
</dbReference>
<dbReference type="InterPro" id="IPR014721">
    <property type="entry name" value="Ribsml_uS5_D2-typ_fold_subgr"/>
</dbReference>
<dbReference type="NCBIfam" id="NF001099">
    <property type="entry name" value="PRK00132.1"/>
    <property type="match status" value="1"/>
</dbReference>
<dbReference type="PANTHER" id="PTHR21569">
    <property type="entry name" value="RIBOSOMAL PROTEIN S9"/>
    <property type="match status" value="1"/>
</dbReference>
<dbReference type="PANTHER" id="PTHR21569:SF1">
    <property type="entry name" value="SMALL RIBOSOMAL SUBUNIT PROTEIN US9M"/>
    <property type="match status" value="1"/>
</dbReference>
<dbReference type="Pfam" id="PF00380">
    <property type="entry name" value="Ribosomal_S9"/>
    <property type="match status" value="1"/>
</dbReference>
<dbReference type="SUPFAM" id="SSF54211">
    <property type="entry name" value="Ribosomal protein S5 domain 2-like"/>
    <property type="match status" value="1"/>
</dbReference>
<dbReference type="PROSITE" id="PS00360">
    <property type="entry name" value="RIBOSOMAL_S9"/>
    <property type="match status" value="1"/>
</dbReference>
<feature type="chain" id="PRO_1000146460" description="Small ribosomal subunit protein uS9">
    <location>
        <begin position="1"/>
        <end position="161"/>
    </location>
</feature>
<feature type="region of interest" description="Disordered" evidence="2">
    <location>
        <begin position="1"/>
        <end position="25"/>
    </location>
</feature>
<feature type="compositionally biased region" description="Polar residues" evidence="2">
    <location>
        <begin position="1"/>
        <end position="21"/>
    </location>
</feature>
<name>RS9_METC4</name>
<protein>
    <recommendedName>
        <fullName evidence="1">Small ribosomal subunit protein uS9</fullName>
    </recommendedName>
    <alternativeName>
        <fullName evidence="3">30S ribosomal protein S9</fullName>
    </alternativeName>
</protein>
<gene>
    <name evidence="1" type="primary">rpsI</name>
    <name type="ordered locus">Mchl_2843</name>
</gene>
<keyword id="KW-0687">Ribonucleoprotein</keyword>
<keyword id="KW-0689">Ribosomal protein</keyword>
<reference key="1">
    <citation type="submission" date="2008-12" db="EMBL/GenBank/DDBJ databases">
        <title>Complete sequence of chromosome of Methylobacterium chloromethanicum CM4.</title>
        <authorList>
            <consortium name="US DOE Joint Genome Institute"/>
            <person name="Lucas S."/>
            <person name="Copeland A."/>
            <person name="Lapidus A."/>
            <person name="Glavina del Rio T."/>
            <person name="Dalin E."/>
            <person name="Tice H."/>
            <person name="Bruce D."/>
            <person name="Goodwin L."/>
            <person name="Pitluck S."/>
            <person name="Chertkov O."/>
            <person name="Brettin T."/>
            <person name="Detter J.C."/>
            <person name="Han C."/>
            <person name="Larimer F."/>
            <person name="Land M."/>
            <person name="Hauser L."/>
            <person name="Kyrpides N."/>
            <person name="Mikhailova N."/>
            <person name="Marx C."/>
            <person name="Richardson P."/>
        </authorList>
    </citation>
    <scope>NUCLEOTIDE SEQUENCE [LARGE SCALE GENOMIC DNA]</scope>
    <source>
        <strain>CM4 / NCIMB 13688</strain>
    </source>
</reference>
<evidence type="ECO:0000255" key="1">
    <source>
        <dbReference type="HAMAP-Rule" id="MF_00532"/>
    </source>
</evidence>
<evidence type="ECO:0000256" key="2">
    <source>
        <dbReference type="SAM" id="MobiDB-lite"/>
    </source>
</evidence>
<evidence type="ECO:0000305" key="3"/>
<proteinExistence type="inferred from homology"/>
<sequence length="161" mass="18066">MATLQSLADLNRANTQTSNPENEAPVHVQKLDAQGRAYATGKRKDAVARVWIKPGNGTVVVNGRPVETYFARPVLRMILRQPLEIVSRVDQYDITVTVKGGGLSGQAGAVRHGLSKALTYYEPELRSSLKREGFLTRDPRVVERKKYGRKKARRSFQFSKR</sequence>